<dbReference type="EC" id="2.4.2.-" evidence="1"/>
<dbReference type="EC" id="2.4.2.22" evidence="1"/>
<dbReference type="EMBL" id="AE008917">
    <property type="protein sequence ID" value="AAL52121.1"/>
    <property type="molecule type" value="Genomic_DNA"/>
</dbReference>
<dbReference type="PIR" id="AF3369">
    <property type="entry name" value="AF3369"/>
</dbReference>
<dbReference type="RefSeq" id="WP_002964164.1">
    <property type="nucleotide sequence ID" value="NZ_GG703778.1"/>
</dbReference>
<dbReference type="SMR" id="Q8YH64"/>
<dbReference type="GeneID" id="93016605"/>
<dbReference type="KEGG" id="bme:BMEI0940"/>
<dbReference type="KEGG" id="bmel:DK63_482"/>
<dbReference type="PATRIC" id="fig|224914.52.peg.504"/>
<dbReference type="eggNOG" id="COG2236">
    <property type="taxonomic scope" value="Bacteria"/>
</dbReference>
<dbReference type="UniPathway" id="UPA00602">
    <property type="reaction ID" value="UER00658"/>
</dbReference>
<dbReference type="UniPathway" id="UPA00909">
    <property type="reaction ID" value="UER00887"/>
</dbReference>
<dbReference type="Proteomes" id="UP000000419">
    <property type="component" value="Chromosome I"/>
</dbReference>
<dbReference type="GO" id="GO:0005886">
    <property type="term" value="C:plasma membrane"/>
    <property type="evidence" value="ECO:0007669"/>
    <property type="project" value="UniProtKB-SubCell"/>
</dbReference>
<dbReference type="GO" id="GO:0052657">
    <property type="term" value="F:guanine phosphoribosyltransferase activity"/>
    <property type="evidence" value="ECO:0007669"/>
    <property type="project" value="RHEA"/>
</dbReference>
<dbReference type="GO" id="GO:0004422">
    <property type="term" value="F:hypoxanthine phosphoribosyltransferase activity"/>
    <property type="evidence" value="ECO:0007669"/>
    <property type="project" value="RHEA"/>
</dbReference>
<dbReference type="GO" id="GO:0000287">
    <property type="term" value="F:magnesium ion binding"/>
    <property type="evidence" value="ECO:0007669"/>
    <property type="project" value="UniProtKB-UniRule"/>
</dbReference>
<dbReference type="GO" id="GO:0000310">
    <property type="term" value="F:xanthine phosphoribosyltransferase activity"/>
    <property type="evidence" value="ECO:0007669"/>
    <property type="project" value="UniProtKB-UniRule"/>
</dbReference>
<dbReference type="GO" id="GO:0032263">
    <property type="term" value="P:GMP salvage"/>
    <property type="evidence" value="ECO:0007669"/>
    <property type="project" value="UniProtKB-UniRule"/>
</dbReference>
<dbReference type="GO" id="GO:0006166">
    <property type="term" value="P:purine ribonucleoside salvage"/>
    <property type="evidence" value="ECO:0007669"/>
    <property type="project" value="UniProtKB-KW"/>
</dbReference>
<dbReference type="GO" id="GO:0032265">
    <property type="term" value="P:XMP salvage"/>
    <property type="evidence" value="ECO:0007669"/>
    <property type="project" value="UniProtKB-UniRule"/>
</dbReference>
<dbReference type="CDD" id="cd06223">
    <property type="entry name" value="PRTases_typeI"/>
    <property type="match status" value="1"/>
</dbReference>
<dbReference type="Gene3D" id="3.40.50.2020">
    <property type="match status" value="1"/>
</dbReference>
<dbReference type="HAMAP" id="MF_01903">
    <property type="entry name" value="XGPRT"/>
    <property type="match status" value="1"/>
</dbReference>
<dbReference type="InterPro" id="IPR000836">
    <property type="entry name" value="PRibTrfase_dom"/>
</dbReference>
<dbReference type="InterPro" id="IPR029057">
    <property type="entry name" value="PRTase-like"/>
</dbReference>
<dbReference type="InterPro" id="IPR023747">
    <property type="entry name" value="Xanthine_Guanine_PRibTrfase"/>
</dbReference>
<dbReference type="NCBIfam" id="NF006613">
    <property type="entry name" value="PRK09177.1"/>
    <property type="match status" value="1"/>
</dbReference>
<dbReference type="PANTHER" id="PTHR39563">
    <property type="entry name" value="XANTHINE PHOSPHORIBOSYLTRANSFERASE"/>
    <property type="match status" value="1"/>
</dbReference>
<dbReference type="PANTHER" id="PTHR39563:SF1">
    <property type="entry name" value="XANTHINE-GUANINE PHOSPHORIBOSYLTRANSFERASE"/>
    <property type="match status" value="1"/>
</dbReference>
<dbReference type="Pfam" id="PF00156">
    <property type="entry name" value="Pribosyltran"/>
    <property type="match status" value="1"/>
</dbReference>
<dbReference type="SUPFAM" id="SSF53271">
    <property type="entry name" value="PRTase-like"/>
    <property type="match status" value="1"/>
</dbReference>
<reference key="1">
    <citation type="journal article" date="2002" name="Proc. Natl. Acad. Sci. U.S.A.">
        <title>The genome sequence of the facultative intracellular pathogen Brucella melitensis.</title>
        <authorList>
            <person name="DelVecchio V.G."/>
            <person name="Kapatral V."/>
            <person name="Redkar R.J."/>
            <person name="Patra G."/>
            <person name="Mujer C."/>
            <person name="Los T."/>
            <person name="Ivanova N."/>
            <person name="Anderson I."/>
            <person name="Bhattacharyya A."/>
            <person name="Lykidis A."/>
            <person name="Reznik G."/>
            <person name="Jablonski L."/>
            <person name="Larsen N."/>
            <person name="D'Souza M."/>
            <person name="Bernal A."/>
            <person name="Mazur M."/>
            <person name="Goltsman E."/>
            <person name="Selkov E."/>
            <person name="Elzer P.H."/>
            <person name="Hagius S."/>
            <person name="O'Callaghan D."/>
            <person name="Letesson J.-J."/>
            <person name="Haselkorn R."/>
            <person name="Kyrpides N.C."/>
            <person name="Overbeek R."/>
        </authorList>
    </citation>
    <scope>NUCLEOTIDE SEQUENCE [LARGE SCALE GENOMIC DNA]</scope>
    <source>
        <strain>ATCC 23456 / CCUG 17765 / NCTC 10094 / 16M</strain>
    </source>
</reference>
<protein>
    <recommendedName>
        <fullName evidence="1">Xanthine-guanine phosphoribosyltransferase</fullName>
        <shortName evidence="1">XGPRT</shortName>
        <ecNumber evidence="1">2.4.2.-</ecNumber>
        <ecNumber evidence="1">2.4.2.22</ecNumber>
    </recommendedName>
    <alternativeName>
        <fullName evidence="1">Xanthine phosphoribosyltransferase</fullName>
    </alternativeName>
</protein>
<organism>
    <name type="scientific">Brucella melitensis biotype 1 (strain ATCC 23456 / CCUG 17765 / NCTC 10094 / 16M)</name>
    <dbReference type="NCBI Taxonomy" id="224914"/>
    <lineage>
        <taxon>Bacteria</taxon>
        <taxon>Pseudomonadati</taxon>
        <taxon>Pseudomonadota</taxon>
        <taxon>Alphaproteobacteria</taxon>
        <taxon>Hyphomicrobiales</taxon>
        <taxon>Brucellaceae</taxon>
        <taxon>Brucella/Ochrobactrum group</taxon>
        <taxon>Brucella</taxon>
    </lineage>
</organism>
<feature type="chain" id="PRO_0000139658" description="Xanthine-guanine phosphoribosyltransferase">
    <location>
        <begin position="1"/>
        <end position="170"/>
    </location>
</feature>
<feature type="binding site" evidence="1">
    <location>
        <begin position="41"/>
        <end position="42"/>
    </location>
    <ligand>
        <name>5-phospho-alpha-D-ribose 1-diphosphate</name>
        <dbReference type="ChEBI" id="CHEBI:58017"/>
    </ligand>
</feature>
<feature type="binding site" evidence="1">
    <location>
        <begin position="98"/>
        <end position="106"/>
    </location>
    <ligand>
        <name>5-phospho-alpha-D-ribose 1-diphosphate</name>
        <dbReference type="ChEBI" id="CHEBI:58017"/>
    </ligand>
</feature>
<feature type="binding site" evidence="1">
    <location>
        <position position="99"/>
    </location>
    <ligand>
        <name>Mg(2+)</name>
        <dbReference type="ChEBI" id="CHEBI:18420"/>
    </ligand>
</feature>
<feature type="binding site" evidence="1">
    <location>
        <begin position="102"/>
        <end position="106"/>
    </location>
    <ligand>
        <name>GMP</name>
        <dbReference type="ChEBI" id="CHEBI:58115"/>
    </ligand>
</feature>
<feature type="binding site" evidence="1">
    <location>
        <position position="102"/>
    </location>
    <ligand>
        <name>guanine</name>
        <dbReference type="ChEBI" id="CHEBI:16235"/>
    </ligand>
</feature>
<feature type="binding site" evidence="1">
    <location>
        <position position="102"/>
    </location>
    <ligand>
        <name>xanthine</name>
        <dbReference type="ChEBI" id="CHEBI:17712"/>
    </ligand>
</feature>
<comment type="function">
    <text evidence="1">Purine salvage pathway enzyme that catalyzes the transfer of the ribosyl-5-phosphate group from 5-phospho-alpha-D-ribose 1-diphosphate (PRPP) to the N9 position of the 6-oxopurines guanine and xanthine to form the corresponding ribonucleotides GMP (guanosine 5'-monophosphate) and XMP (xanthosine 5'-monophosphate), with the release of PPi. To a lesser extent, also acts on hypoxanthine.</text>
</comment>
<comment type="catalytic activity">
    <reaction evidence="1">
        <text>GMP + diphosphate = guanine + 5-phospho-alpha-D-ribose 1-diphosphate</text>
        <dbReference type="Rhea" id="RHEA:25424"/>
        <dbReference type="ChEBI" id="CHEBI:16235"/>
        <dbReference type="ChEBI" id="CHEBI:33019"/>
        <dbReference type="ChEBI" id="CHEBI:58017"/>
        <dbReference type="ChEBI" id="CHEBI:58115"/>
    </reaction>
    <physiologicalReaction direction="right-to-left" evidence="1">
        <dbReference type="Rhea" id="RHEA:25426"/>
    </physiologicalReaction>
</comment>
<comment type="catalytic activity">
    <reaction evidence="1">
        <text>XMP + diphosphate = xanthine + 5-phospho-alpha-D-ribose 1-diphosphate</text>
        <dbReference type="Rhea" id="RHEA:10800"/>
        <dbReference type="ChEBI" id="CHEBI:17712"/>
        <dbReference type="ChEBI" id="CHEBI:33019"/>
        <dbReference type="ChEBI" id="CHEBI:57464"/>
        <dbReference type="ChEBI" id="CHEBI:58017"/>
        <dbReference type="EC" id="2.4.2.22"/>
    </reaction>
    <physiologicalReaction direction="right-to-left" evidence="1">
        <dbReference type="Rhea" id="RHEA:10802"/>
    </physiologicalReaction>
</comment>
<comment type="catalytic activity">
    <reaction evidence="1">
        <text>IMP + diphosphate = hypoxanthine + 5-phospho-alpha-D-ribose 1-diphosphate</text>
        <dbReference type="Rhea" id="RHEA:17973"/>
        <dbReference type="ChEBI" id="CHEBI:17368"/>
        <dbReference type="ChEBI" id="CHEBI:33019"/>
        <dbReference type="ChEBI" id="CHEBI:58017"/>
        <dbReference type="ChEBI" id="CHEBI:58053"/>
    </reaction>
    <physiologicalReaction direction="right-to-left" evidence="1">
        <dbReference type="Rhea" id="RHEA:17975"/>
    </physiologicalReaction>
</comment>
<comment type="cofactor">
    <cofactor evidence="1">
        <name>Mg(2+)</name>
        <dbReference type="ChEBI" id="CHEBI:18420"/>
    </cofactor>
</comment>
<comment type="pathway">
    <text evidence="1">Purine metabolism; GMP biosynthesis via salvage pathway; GMP from guanine: step 1/1.</text>
</comment>
<comment type="pathway">
    <text evidence="1">Purine metabolism; XMP biosynthesis via salvage pathway; XMP from xanthine: step 1/1.</text>
</comment>
<comment type="subunit">
    <text evidence="1">Homotetramer.</text>
</comment>
<comment type="subcellular location">
    <subcellularLocation>
        <location evidence="1">Cell inner membrane</location>
        <topology evidence="1">Peripheral membrane protein</topology>
    </subcellularLocation>
</comment>
<comment type="similarity">
    <text evidence="1">Belongs to the purine/pyrimidine phosphoribosyltransferase family. XGPT subfamily.</text>
</comment>
<gene>
    <name evidence="1" type="primary">gpt</name>
    <name type="ordered locus">BMEI0940</name>
</gene>
<proteinExistence type="inferred from homology"/>
<keyword id="KW-0997">Cell inner membrane</keyword>
<keyword id="KW-1003">Cell membrane</keyword>
<keyword id="KW-0328">Glycosyltransferase</keyword>
<keyword id="KW-0460">Magnesium</keyword>
<keyword id="KW-0472">Membrane</keyword>
<keyword id="KW-0479">Metal-binding</keyword>
<keyword id="KW-0660">Purine salvage</keyword>
<keyword id="KW-0808">Transferase</keyword>
<sequence>MSLPDKAFPVSWDQFHRDARALAWRIAGLDREWRAIVAITRGGLVPAAIICRELGIRLIETVCIASYHDYTSQGEMQVLKGIGASLLENQGEGVIVVDDLTDTGKTAAIVREMMPRAHFATVYAKPKGRPLIDTLRHGGLTGYLDLFPMGYGLHLSGADCWRKTRLNETK</sequence>
<evidence type="ECO:0000255" key="1">
    <source>
        <dbReference type="HAMAP-Rule" id="MF_01903"/>
    </source>
</evidence>
<name>XGPT_BRUME</name>
<accession>Q8YH64</accession>